<proteinExistence type="evidence at protein level"/>
<name>ANM1_CAEEL</name>
<feature type="chain" id="PRO_0000439508" description="Protein arginine N-methyltransferase 1" evidence="11">
    <location>
        <begin position="1"/>
        <end position="348"/>
    </location>
</feature>
<feature type="domain" description="SAM-dependent MTase PRMT-type" evidence="3">
    <location>
        <begin position="24"/>
        <end position="342"/>
    </location>
</feature>
<feature type="active site" evidence="1">
    <location>
        <position position="139"/>
    </location>
</feature>
<feature type="active site" evidence="1">
    <location>
        <position position="148"/>
    </location>
</feature>
<feature type="binding site" evidence="1">
    <location>
        <position position="37"/>
    </location>
    <ligand>
        <name>S-adenosyl-L-methionine</name>
        <dbReference type="ChEBI" id="CHEBI:59789"/>
    </ligand>
</feature>
<feature type="binding site" evidence="1">
    <location>
        <position position="46"/>
    </location>
    <ligand>
        <name>S-adenosyl-L-methionine</name>
        <dbReference type="ChEBI" id="CHEBI:59789"/>
    </ligand>
</feature>
<feature type="binding site" evidence="1">
    <location>
        <position position="70"/>
    </location>
    <ligand>
        <name>S-adenosyl-L-methionine</name>
        <dbReference type="ChEBI" id="CHEBI:59789"/>
    </ligand>
</feature>
<feature type="binding site" evidence="1">
    <location>
        <position position="92"/>
    </location>
    <ligand>
        <name>S-adenosyl-L-methionine</name>
        <dbReference type="ChEBI" id="CHEBI:59789"/>
    </ligand>
</feature>
<feature type="binding site" evidence="1">
    <location>
        <position position="121"/>
    </location>
    <ligand>
        <name>S-adenosyl-L-methionine</name>
        <dbReference type="ChEBI" id="CHEBI:59789"/>
    </ligand>
</feature>
<feature type="mutagenesis site" description="Defective S-adenosyl-L-methionine binding and reduces methylation of daf-16." evidence="4">
    <original>G</original>
    <variation>A</variation>
    <location>
        <position position="70"/>
    </location>
</feature>
<feature type="mutagenesis site" description="In bp292; reduces methylation and impairs degradation of P-granule components pgl-1 and pgl-3 in somatic cells during embryogenesis. Reduces lifespan." evidence="6">
    <original>H</original>
    <variation>Y</variation>
    <location>
        <position position="288"/>
    </location>
</feature>
<gene>
    <name evidence="9 15" type="primary">prmt-1</name>
    <name evidence="10 15" type="synonym">epg-11</name>
    <name evidence="15" type="ORF">Y113G7B.17</name>
</gene>
<sequence>MSTENGKSADAPVAAPAAKELTSKDYYFDSYAHFGIHEEMLKDEVRTTTYRNSIYHNSHLFKDKVVMDVGSGTGILSMFAAKAGAKKVFAMEFSNMALTSRKIIADNNLDHIVEVIQAKVEDVHELPGGIEKVDIIISEWMGYCLFYESMLNTVLVARDRWLAPNGMLFPDKARLYVCAIEDRQYKEDKIHWWDSVYGFNMSAIKNVAIKEPLVDIVDNAQVNTNNCLLKDVDLYTVKIEDLTFKSDFKLRCTRSDYIQAFVTFFTVEFSKCHKKTGFSTGPDVQYTHWKQTVFYLKDALTVKKGEEITGSFEMAPNKNNERDLDINISFDFKGEVCDLNEQNTYTMH</sequence>
<evidence type="ECO:0000250" key="1">
    <source>
        <dbReference type="UniProtKB" id="Q63009"/>
    </source>
</evidence>
<evidence type="ECO:0000250" key="2">
    <source>
        <dbReference type="UniProtKB" id="Q99873"/>
    </source>
</evidence>
<evidence type="ECO:0000255" key="3">
    <source>
        <dbReference type="PROSITE-ProRule" id="PRU01015"/>
    </source>
</evidence>
<evidence type="ECO:0000269" key="4">
    <source>
    </source>
</evidence>
<evidence type="ECO:0000269" key="5">
    <source>
    </source>
</evidence>
<evidence type="ECO:0000269" key="6">
    <source>
    </source>
</evidence>
<evidence type="ECO:0000269" key="7">
    <source>
    </source>
</evidence>
<evidence type="ECO:0000269" key="8">
    <source>
    </source>
</evidence>
<evidence type="ECO:0000303" key="9">
    <source>
    </source>
</evidence>
<evidence type="ECO:0000303" key="10">
    <source>
    </source>
</evidence>
<evidence type="ECO:0000305" key="11"/>
<evidence type="ECO:0000305" key="12">
    <source>
    </source>
</evidence>
<evidence type="ECO:0000305" key="13">
    <source>
    </source>
</evidence>
<evidence type="ECO:0000312" key="14">
    <source>
        <dbReference type="Proteomes" id="UP000001940"/>
    </source>
</evidence>
<evidence type="ECO:0000312" key="15">
    <source>
        <dbReference type="WormBase" id="Y113G7B.17"/>
    </source>
</evidence>
<accession>Q9U2X0</accession>
<protein>
    <recommendedName>
        <fullName evidence="15">Protein arginine N-methyltransferase 1</fullName>
        <ecNumber evidence="4 6 12 13">2.1.1.319</ecNumber>
    </recommendedName>
</protein>
<dbReference type="EC" id="2.1.1.319" evidence="4 6 12 13"/>
<dbReference type="EMBL" id="BX284605">
    <property type="protein sequence ID" value="CAB54335.1"/>
    <property type="molecule type" value="Genomic_DNA"/>
</dbReference>
<dbReference type="PIR" id="T26447">
    <property type="entry name" value="T26447"/>
</dbReference>
<dbReference type="RefSeq" id="NP_507909.1">
    <property type="nucleotide sequence ID" value="NM_075508.8"/>
</dbReference>
<dbReference type="SMR" id="Q9U2X0"/>
<dbReference type="FunCoup" id="Q9U2X0">
    <property type="interactions" value="2453"/>
</dbReference>
<dbReference type="IntAct" id="Q9U2X0">
    <property type="interactions" value="4"/>
</dbReference>
<dbReference type="STRING" id="6239.Y113G7B.17.1"/>
<dbReference type="PaxDb" id="6239-Y113G7B.17.1"/>
<dbReference type="PeptideAtlas" id="Q9U2X0"/>
<dbReference type="EnsemblMetazoa" id="Y113G7B.17.1">
    <property type="protein sequence ID" value="Y113G7B.17.1"/>
    <property type="gene ID" value="WBGene00013766"/>
</dbReference>
<dbReference type="EnsemblMetazoa" id="Y113G7B.17.2">
    <property type="protein sequence ID" value="Y113G7B.17.2"/>
    <property type="gene ID" value="WBGene00013766"/>
</dbReference>
<dbReference type="GeneID" id="180326"/>
<dbReference type="KEGG" id="cel:CELE_Y113G7B.17"/>
<dbReference type="UCSC" id="Y113G7B.17.1">
    <property type="organism name" value="c. elegans"/>
</dbReference>
<dbReference type="AGR" id="WB:WBGene00013766"/>
<dbReference type="CTD" id="180326"/>
<dbReference type="WormBase" id="Y113G7B.17">
    <property type="protein sequence ID" value="CE23297"/>
    <property type="gene ID" value="WBGene00013766"/>
    <property type="gene designation" value="prmt-1"/>
</dbReference>
<dbReference type="eggNOG" id="KOG1499">
    <property type="taxonomic scope" value="Eukaryota"/>
</dbReference>
<dbReference type="GeneTree" id="ENSGT00940000155867"/>
<dbReference type="HOGENOM" id="CLU_017375_1_2_1"/>
<dbReference type="InParanoid" id="Q9U2X0"/>
<dbReference type="OMA" id="QRNDHIH"/>
<dbReference type="OrthoDB" id="7848332at2759"/>
<dbReference type="PhylomeDB" id="Q9U2X0"/>
<dbReference type="BRENDA" id="2.1.1.319">
    <property type="organism ID" value="1045"/>
</dbReference>
<dbReference type="Reactome" id="R-CEL-3214858">
    <property type="pathway name" value="RMTs methylate histone arginines"/>
</dbReference>
<dbReference type="Reactome" id="R-CEL-8936459">
    <property type="pathway name" value="RUNX1 regulates genes involved in megakaryocyte differentiation and platelet function"/>
</dbReference>
<dbReference type="SignaLink" id="Q9U2X0"/>
<dbReference type="PRO" id="PR:Q9U2X0"/>
<dbReference type="Proteomes" id="UP000001940">
    <property type="component" value="Chromosome V"/>
</dbReference>
<dbReference type="Bgee" id="WBGene00013766">
    <property type="expression patterns" value="Expressed in germ line (C elegans) and 4 other cell types or tissues"/>
</dbReference>
<dbReference type="GO" id="GO:0005737">
    <property type="term" value="C:cytoplasm"/>
    <property type="evidence" value="ECO:0000314"/>
    <property type="project" value="WormBase"/>
</dbReference>
<dbReference type="GO" id="GO:0005783">
    <property type="term" value="C:endoplasmic reticulum"/>
    <property type="evidence" value="ECO:0007005"/>
    <property type="project" value="WormBase"/>
</dbReference>
<dbReference type="GO" id="GO:0005634">
    <property type="term" value="C:nucleus"/>
    <property type="evidence" value="ECO:0000318"/>
    <property type="project" value="GO_Central"/>
</dbReference>
<dbReference type="GO" id="GO:0140940">
    <property type="term" value="F:histone H2A methyltransferase activity"/>
    <property type="evidence" value="ECO:0000314"/>
    <property type="project" value="UniProtKB"/>
</dbReference>
<dbReference type="GO" id="GO:0140939">
    <property type="term" value="F:histone H4 methyltransferase activity"/>
    <property type="evidence" value="ECO:0000314"/>
    <property type="project" value="UniProtKB"/>
</dbReference>
<dbReference type="GO" id="GO:0042054">
    <property type="term" value="F:histone methyltransferase activity"/>
    <property type="evidence" value="ECO:0000318"/>
    <property type="project" value="GO_Central"/>
</dbReference>
<dbReference type="GO" id="GO:0016274">
    <property type="term" value="F:protein-arginine N-methyltransferase activity"/>
    <property type="evidence" value="ECO:0000314"/>
    <property type="project" value="WormBase"/>
</dbReference>
<dbReference type="GO" id="GO:0035242">
    <property type="term" value="F:protein-arginine omega-N asymmetric methyltransferase activity"/>
    <property type="evidence" value="ECO:0000314"/>
    <property type="project" value="WormBase"/>
</dbReference>
<dbReference type="GO" id="GO:0035241">
    <property type="term" value="F:protein-arginine omega-N monomethyltransferase activity"/>
    <property type="evidence" value="ECO:0000314"/>
    <property type="project" value="UniProtKB"/>
</dbReference>
<dbReference type="GO" id="GO:1904047">
    <property type="term" value="F:S-adenosyl-L-methionine binding"/>
    <property type="evidence" value="ECO:0000314"/>
    <property type="project" value="UniProtKB"/>
</dbReference>
<dbReference type="GO" id="GO:0006338">
    <property type="term" value="P:chromatin remodeling"/>
    <property type="evidence" value="ECO:0000318"/>
    <property type="project" value="GO_Central"/>
</dbReference>
<dbReference type="GO" id="GO:0010286">
    <property type="term" value="P:heat acclimation"/>
    <property type="evidence" value="ECO:0000316"/>
    <property type="project" value="UniProtKB"/>
</dbReference>
<dbReference type="GO" id="GO:0032259">
    <property type="term" value="P:methylation"/>
    <property type="evidence" value="ECO:0007669"/>
    <property type="project" value="UniProtKB-KW"/>
</dbReference>
<dbReference type="GO" id="GO:0032091">
    <property type="term" value="P:negative regulation of protein binding"/>
    <property type="evidence" value="ECO:0000315"/>
    <property type="project" value="UniProtKB"/>
</dbReference>
<dbReference type="GO" id="GO:0010628">
    <property type="term" value="P:positive regulation of gene expression"/>
    <property type="evidence" value="ECO:0000315"/>
    <property type="project" value="UniProtKB"/>
</dbReference>
<dbReference type="GO" id="GO:1900182">
    <property type="term" value="P:positive regulation of protein localization to nucleus"/>
    <property type="evidence" value="ECO:0000315"/>
    <property type="project" value="UniProtKB"/>
</dbReference>
<dbReference type="GO" id="GO:1905909">
    <property type="term" value="P:regulation of dauer entry"/>
    <property type="evidence" value="ECO:0000316"/>
    <property type="project" value="UniProtKB"/>
</dbReference>
<dbReference type="GO" id="GO:0006355">
    <property type="term" value="P:regulation of DNA-templated transcription"/>
    <property type="evidence" value="ECO:0000318"/>
    <property type="project" value="GO_Central"/>
</dbReference>
<dbReference type="GO" id="GO:0010468">
    <property type="term" value="P:regulation of gene expression"/>
    <property type="evidence" value="ECO:0000316"/>
    <property type="project" value="UniProtKB"/>
</dbReference>
<dbReference type="GO" id="GO:0010883">
    <property type="term" value="P:regulation of lipid storage"/>
    <property type="evidence" value="ECO:0000316"/>
    <property type="project" value="UniProtKB"/>
</dbReference>
<dbReference type="GO" id="GO:0006979">
    <property type="term" value="P:response to oxidative stress"/>
    <property type="evidence" value="ECO:0000316"/>
    <property type="project" value="UniProtKB"/>
</dbReference>
<dbReference type="GO" id="GO:0042594">
    <property type="term" value="P:response to starvation"/>
    <property type="evidence" value="ECO:0000315"/>
    <property type="project" value="UniProtKB"/>
</dbReference>
<dbReference type="GO" id="GO:0009411">
    <property type="term" value="P:response to UV"/>
    <property type="evidence" value="ECO:0000316"/>
    <property type="project" value="UniProtKB"/>
</dbReference>
<dbReference type="CDD" id="cd02440">
    <property type="entry name" value="AdoMet_MTases"/>
    <property type="match status" value="1"/>
</dbReference>
<dbReference type="FunFam" id="2.70.160.11:FF:000001">
    <property type="entry name" value="Blast:Protein arginine N-methyltransferase 1"/>
    <property type="match status" value="1"/>
</dbReference>
<dbReference type="FunFam" id="3.40.50.150:FF:000003">
    <property type="entry name" value="Blast:Protein arginine N-methyltransferase 1"/>
    <property type="match status" value="1"/>
</dbReference>
<dbReference type="Gene3D" id="2.70.160.11">
    <property type="entry name" value="Hnrnp arginine n-methyltransferase1"/>
    <property type="match status" value="1"/>
</dbReference>
<dbReference type="Gene3D" id="3.40.50.150">
    <property type="entry name" value="Vaccinia Virus protein VP39"/>
    <property type="match status" value="1"/>
</dbReference>
<dbReference type="InterPro" id="IPR025799">
    <property type="entry name" value="Arg_MeTrfase"/>
</dbReference>
<dbReference type="InterPro" id="IPR055135">
    <property type="entry name" value="PRMT_dom"/>
</dbReference>
<dbReference type="InterPro" id="IPR029063">
    <property type="entry name" value="SAM-dependent_MTases_sf"/>
</dbReference>
<dbReference type="PANTHER" id="PTHR11006:SF124">
    <property type="entry name" value="ARGININE METHYLTRANSFERASE 1-RELATED"/>
    <property type="match status" value="1"/>
</dbReference>
<dbReference type="PANTHER" id="PTHR11006">
    <property type="entry name" value="PROTEIN ARGININE N-METHYLTRANSFERASE"/>
    <property type="match status" value="1"/>
</dbReference>
<dbReference type="Pfam" id="PF06325">
    <property type="entry name" value="PrmA"/>
    <property type="match status" value="1"/>
</dbReference>
<dbReference type="Pfam" id="PF22528">
    <property type="entry name" value="PRMT_C"/>
    <property type="match status" value="1"/>
</dbReference>
<dbReference type="SUPFAM" id="SSF53335">
    <property type="entry name" value="S-adenosyl-L-methionine-dependent methyltransferases"/>
    <property type="match status" value="1"/>
</dbReference>
<dbReference type="PROSITE" id="PS51678">
    <property type="entry name" value="SAM_MT_PRMT"/>
    <property type="match status" value="1"/>
</dbReference>
<organism evidence="14">
    <name type="scientific">Caenorhabditis elegans</name>
    <dbReference type="NCBI Taxonomy" id="6239"/>
    <lineage>
        <taxon>Eukaryota</taxon>
        <taxon>Metazoa</taxon>
        <taxon>Ecdysozoa</taxon>
        <taxon>Nematoda</taxon>
        <taxon>Chromadorea</taxon>
        <taxon>Rhabditida</taxon>
        <taxon>Rhabditina</taxon>
        <taxon>Rhabditomorpha</taxon>
        <taxon>Rhabditoidea</taxon>
        <taxon>Rhabditidae</taxon>
        <taxon>Peloderinae</taxon>
        <taxon>Caenorhabditis</taxon>
    </lineage>
</organism>
<keyword id="KW-0963">Cytoplasm</keyword>
<keyword id="KW-0489">Methyltransferase</keyword>
<keyword id="KW-0539">Nucleus</keyword>
<keyword id="KW-1185">Reference proteome</keyword>
<keyword id="KW-0949">S-adenosyl-L-methionine</keyword>
<keyword id="KW-0808">Transferase</keyword>
<comment type="function">
    <text evidence="4 6 7 8">Arginine methyltransferase that methylates (mono and asymmetric dimethylation) the guanidino nitrogens of arginyl residues present in target proteins (PubMed:21531333, PubMed:24140420, PubMed:27994012, PubMed:28158808). Catalyzes the formation of monomethylarginine and asymmetric dimethylarginine on histones H2A and H4, a specific tag for epigenetic transcriptional activation (PubMed:21531333). Catalyzes asymmetric arginine dimethylation of mitochondrial proteins necessary for mitochondrial oxidative phosphorylation activity and thus aerobic respiration and ATP synthesis, and the mitochondrial stress response (PubMed:27994012). Methylates arginine residues in P-granule components pgl-1 and pgl-3 to promote P-granule degradation by autophagy in somatic cells to ensure exclusive localization of the P-granules in germ cells (PubMed:24140420). Modulates the interaction of P-granule proteins epg-2 and sepa-1 (PubMed:24140420). Methylates arginine residues in daf-16, which blocks ftt-2 binding to daf-16, prevents akt-mediated phosphorylation and allows for daf-16 to translocate to the nucleus (PubMed:21531333). In turn, association with daf-16 therefore allows for the transcriptional activation of daf-16 and regulation of longevity-related genes (PubMed:21531333). Maintains lifespan by modulating daf-16 activity downstream of the daf-2 signaling pathway (PubMed:21531333, PubMed:28158808). Plays a role in heat and oxidative stress resistance (PubMed:21531333, PubMed:28158808). Role in stress resistance and also fat storage may be in association with the daf-2 signaling pathway (PubMed:21531333). Required for normal feeding behavior (PubMed:27994012).</text>
</comment>
<comment type="catalytic activity">
    <reaction evidence="4 6 12 13">
        <text>L-arginyl-[protein] + 2 S-adenosyl-L-methionine = N(omega),N(omega)-dimethyl-L-arginyl-[protein] + 2 S-adenosyl-L-homocysteine + 2 H(+)</text>
        <dbReference type="Rhea" id="RHEA:48096"/>
        <dbReference type="Rhea" id="RHEA-COMP:10532"/>
        <dbReference type="Rhea" id="RHEA-COMP:11991"/>
        <dbReference type="ChEBI" id="CHEBI:15378"/>
        <dbReference type="ChEBI" id="CHEBI:29965"/>
        <dbReference type="ChEBI" id="CHEBI:57856"/>
        <dbReference type="ChEBI" id="CHEBI:59789"/>
        <dbReference type="ChEBI" id="CHEBI:61897"/>
        <dbReference type="EC" id="2.1.1.319"/>
    </reaction>
</comment>
<comment type="catalytic activity">
    <reaction evidence="2">
        <text>L-arginyl-[protein] + S-adenosyl-L-methionine = N(omega)-methyl-L-arginyl-[protein] + S-adenosyl-L-homocysteine + H(+)</text>
        <dbReference type="Rhea" id="RHEA:48100"/>
        <dbReference type="Rhea" id="RHEA-COMP:10532"/>
        <dbReference type="Rhea" id="RHEA-COMP:11990"/>
        <dbReference type="ChEBI" id="CHEBI:15378"/>
        <dbReference type="ChEBI" id="CHEBI:29965"/>
        <dbReference type="ChEBI" id="CHEBI:57856"/>
        <dbReference type="ChEBI" id="CHEBI:59789"/>
        <dbReference type="ChEBI" id="CHEBI:65280"/>
    </reaction>
    <physiologicalReaction direction="left-to-right" evidence="2">
        <dbReference type="Rhea" id="RHEA:48101"/>
    </physiologicalReaction>
</comment>
<comment type="subunit">
    <text evidence="4 5 6">Interacts with daf-16 (PubMed:21531333). Interacts with pgl-1 and pgl-3 (PubMed:24140420). Interacts with alg-1 (PubMed:23516374).</text>
</comment>
<comment type="subcellular location">
    <subcellularLocation>
        <location evidence="6">Cytoplasm</location>
    </subcellularLocation>
    <subcellularLocation>
        <location evidence="2">Nucleus</location>
    </subcellularLocation>
    <text evidence="6">Diffuse cytoplasmic localization during embryogenesis.</text>
</comment>
<comment type="tissue specificity">
    <text evidence="4 6">Widely expressed in pharyngeal, body wall muscle, intestinal and vulval cells.</text>
</comment>
<comment type="developmental stage">
    <text evidence="4 6">Expressed from embryogenesis (PubMed:24140420). Expressed during larval development and adulthood (PubMed:21531333).</text>
</comment>
<comment type="disruption phenotype">
    <text evidence="4 7 8">Viable with a slight decrease in egg-laying (PubMed:28158808). Defective arginine methyltransferase activity with reduced asymmetric dimethylation of targets (PubMed:21531333, PubMed:28158808). Reduced asymmetric arginine dimethylation of mitochondrial proteins which results in defective mitochondrial oxidative phosphorylation activity characterized by a reduced oxygen consumption rate during aerobic respiration as compared to wild-type animals, defective electron chain function and increased reactive oxygen species production (PubMed:27994012). This overall leads to reduced ATP synthesis and increased mitochondrial stress with an up-regulation of stress response genes conferring a food avoidance phenotype (PubMed:27994012). Defective symmetric arginine dimethylation of targets in mitochondria (PubMed:27994012). Increased phosphorylation of daf-16, increased binding of daf-16 to ftt-2 and subsequently increased cytoplasmic retention of daf-16 (PubMed:21531333). Reduced lifespan as a result of reduced expression of longevity-related proteins such as sod-3, mtl-7, sip-1 and lys-7 (PubMed:21531333, PubMed:28158808). Increased sensitivity to heat and oxidative stress (PubMed:28158808). Double knockout with prmt-5 results in prolonged larval development, shorter body size, reduced brood size, decreased egg-laying and 30% of eggs fail to hatch (PubMed:28158808). Double knockout also results in reduced asymmetric and symmetric arginine dimethylation of proteins (PubMed:28158808).</text>
</comment>
<comment type="similarity">
    <text evidence="3">Belongs to the class I-like SAM-binding methyltransferase superfamily. Protein arginine N-methyltransferase family.</text>
</comment>
<reference evidence="14" key="1">
    <citation type="journal article" date="1998" name="Science">
        <title>Genome sequence of the nematode C. elegans: a platform for investigating biology.</title>
        <authorList>
            <consortium name="The C. elegans sequencing consortium"/>
        </authorList>
    </citation>
    <scope>NUCLEOTIDE SEQUENCE [LARGE SCALE GENOMIC DNA]</scope>
    <source>
        <strain evidence="14">Bristol N2</strain>
    </source>
</reference>
<reference evidence="11" key="2">
    <citation type="journal article" date="2011" name="Cell Metab.">
        <title>Asymmetric arginine dimethylation determines life span in C. elegans by regulating forkhead transcription factor DAF-16.</title>
        <authorList>
            <person name="Takahashi Y."/>
            <person name="Daitoku H."/>
            <person name="Hirota K."/>
            <person name="Tamiya H."/>
            <person name="Yokoyama A."/>
            <person name="Kako K."/>
            <person name="Nagashima Y."/>
            <person name="Nakamura A."/>
            <person name="Shimada T."/>
            <person name="Watanabe S."/>
            <person name="Yamagata K."/>
            <person name="Yasuda K."/>
            <person name="Ishii N."/>
            <person name="Fukamizu A."/>
        </authorList>
    </citation>
    <scope>FUNCTION</scope>
    <scope>CATALYTIC ACTIVITY</scope>
    <scope>INTERACTION WITH DAF-16</scope>
    <scope>TISSUE SPECIFICITY</scope>
    <scope>DEVELOPMENTAL STAGE</scope>
    <scope>DISRUPTION PHENOTYPE</scope>
    <scope>MUTAGENESIS OF GLY-70</scope>
</reference>
<reference evidence="11" key="3">
    <citation type="journal article" date="2013" name="Mol. Cell">
        <title>Arginine methylation modulates autophagic degradation of PGL granules in C. elegans.</title>
        <authorList>
            <person name="Li S."/>
            <person name="Yang P."/>
            <person name="Tian E."/>
            <person name="Zhang H."/>
        </authorList>
    </citation>
    <scope>FUNCTION</scope>
    <scope>CATALYTIC ACTIVITY</scope>
    <scope>INTERACTION WITH PGL-1 AND PGL-3</scope>
    <scope>SUBCELLULAR LOCATION</scope>
    <scope>TISSUE SPECIFICITY</scope>
    <scope>DEVELOPMENTAL STAGE</scope>
    <scope>MUTAGENESIS OF HIS-288</scope>
</reference>
<reference evidence="11" key="4">
    <citation type="journal article" date="2013" name="PLoS Genet.">
        <title>Functional genomic analysis of the let-7 regulatory network in Caenorhabditis elegans.</title>
        <authorList>
            <person name="Hunter S.E."/>
            <person name="Finnegan E.F."/>
            <person name="Zisoulis D.G."/>
            <person name="Lovci M.T."/>
            <person name="Melnik-Martinez K.V."/>
            <person name="Yeo G.W."/>
            <person name="Pasquinelli A.E."/>
        </authorList>
    </citation>
    <scope>INTERACTION WITH ALG-1</scope>
</reference>
<reference evidence="11" key="5">
    <citation type="journal article" date="2016" name="Mol. Cell. Biol.">
        <title>Asymmetric arginine dimethylation modulates mitochondrial energy metabolism and homeostasis in Caenorhabditis elegans.</title>
        <authorList>
            <person name="Sha L."/>
            <person name="Daitoku H."/>
            <person name="Araoi S."/>
            <person name="Kaneko Y."/>
            <person name="Takahashi Y."/>
            <person name="Kako K."/>
            <person name="Fukamizu A."/>
        </authorList>
    </citation>
    <scope>FUNCTION</scope>
    <scope>CATALYTIC ACTIVITY</scope>
    <scope>DISRUPTION PHENOTYPE</scope>
</reference>
<reference evidence="11" key="6">
    <citation type="journal article" date="2017" name="J. Biochem.">
        <title>Simultaneous ablation of prmt-1 and prmt-5 abolishes asymmetric and symmetric arginine dimethylations in Caenorhabditis elegans.</title>
        <authorList>
            <person name="Hirota K."/>
            <person name="Shigekawa C."/>
            <person name="Araoi S."/>
            <person name="Sha L."/>
            <person name="Inagawa T."/>
            <person name="Kanou A."/>
            <person name="Kako K."/>
            <person name="Daitoku H."/>
            <person name="Fukamizu A."/>
        </authorList>
    </citation>
    <scope>FUNCTION</scope>
    <scope>CATALYTIC ACTIVITY</scope>
    <scope>DISRUPTION PHENOTYPE</scope>
</reference>